<comment type="function">
    <text>Involved in induction of the so-called NTR enzymes in response to nitrogen deprivation, as well as in glutamate biosynthesis. May mediate the glutamate-dependent repression of the GLT operon.</text>
</comment>
<comment type="subcellular location">
    <subcellularLocation>
        <location evidence="3">Cell membrane</location>
        <topology evidence="3">Single-pass membrane protein</topology>
    </subcellularLocation>
</comment>
<comment type="induction">
    <text evidence="2">Repressed by H-NS, induced by LeuO. A monocistronic operon.</text>
</comment>
<comment type="similarity">
    <text evidence="3">To E.coli YhcF.</text>
</comment>
<proteinExistence type="evidence at transcript level"/>
<protein>
    <recommendedName>
        <fullName>Protein GltF</fullName>
    </recommendedName>
</protein>
<reference key="1">
    <citation type="journal article" date="1992" name="Mol. Microbiol.">
        <title>gltF, a member of the gltBDF operon of Escherichia coli, is involved in nitrogen-regulated gene expression.</title>
        <authorList>
            <person name="Castano I."/>
            <person name="Flores N."/>
            <person name="Valle F."/>
            <person name="Covarrubias A.A."/>
            <person name="Bolivar F."/>
        </authorList>
    </citation>
    <scope>NUCLEOTIDE SEQUENCE [GENOMIC DNA]</scope>
    <source>
        <strain>K12</strain>
    </source>
</reference>
<reference key="2">
    <citation type="journal article" date="1997" name="Science">
        <title>The complete genome sequence of Escherichia coli K-12.</title>
        <authorList>
            <person name="Blattner F.R."/>
            <person name="Plunkett G. III"/>
            <person name="Bloch C.A."/>
            <person name="Perna N.T."/>
            <person name="Burland V."/>
            <person name="Riley M."/>
            <person name="Collado-Vides J."/>
            <person name="Glasner J.D."/>
            <person name="Rode C.K."/>
            <person name="Mayhew G.F."/>
            <person name="Gregor J."/>
            <person name="Davis N.W."/>
            <person name="Kirkpatrick H.A."/>
            <person name="Goeden M.A."/>
            <person name="Rose D.J."/>
            <person name="Mau B."/>
            <person name="Shao Y."/>
        </authorList>
    </citation>
    <scope>NUCLEOTIDE SEQUENCE [LARGE SCALE GENOMIC DNA]</scope>
    <source>
        <strain>K12 / MG1655 / ATCC 47076</strain>
    </source>
</reference>
<reference key="3">
    <citation type="journal article" date="2006" name="Mol. Syst. Biol.">
        <title>Highly accurate genome sequences of Escherichia coli K-12 strains MG1655 and W3110.</title>
        <authorList>
            <person name="Hayashi K."/>
            <person name="Morooka N."/>
            <person name="Yamamoto Y."/>
            <person name="Fujita K."/>
            <person name="Isono K."/>
            <person name="Choi S."/>
            <person name="Ohtsubo E."/>
            <person name="Baba T."/>
            <person name="Wanner B.L."/>
            <person name="Mori H."/>
            <person name="Horiuchi T."/>
        </authorList>
    </citation>
    <scope>NUCLEOTIDE SEQUENCE [LARGE SCALE GENOMIC DNA]</scope>
    <source>
        <strain>K12 / W3110 / ATCC 27325 / DSM 5911</strain>
    </source>
</reference>
<reference key="4">
    <citation type="journal article" date="2009" name="J. Bacteriol.">
        <title>Involvement of the leucine response transcription factor LeuO in regulation of the genes for sulfa drug efflux.</title>
        <authorList>
            <person name="Shimada T."/>
            <person name="Yamamoto K."/>
            <person name="Ishihama A."/>
        </authorList>
    </citation>
    <scope>OPERON STRUCTURE</scope>
    <scope>INDUCTION</scope>
    <source>
        <strain>K12 / BW25113</strain>
    </source>
</reference>
<keyword id="KW-1003">Cell membrane</keyword>
<keyword id="KW-0472">Membrane</keyword>
<keyword id="KW-1185">Reference proteome</keyword>
<keyword id="KW-0732">Signal</keyword>
<keyword id="KW-0812">Transmembrane</keyword>
<keyword id="KW-1133">Transmembrane helix</keyword>
<accession>P28721</accession>
<accession>Q2M8Z8</accession>
<evidence type="ECO:0000255" key="1"/>
<evidence type="ECO:0000269" key="2">
    <source>
    </source>
</evidence>
<evidence type="ECO:0000305" key="3"/>
<organism>
    <name type="scientific">Escherichia coli (strain K12)</name>
    <dbReference type="NCBI Taxonomy" id="83333"/>
    <lineage>
        <taxon>Bacteria</taxon>
        <taxon>Pseudomonadati</taxon>
        <taxon>Pseudomonadota</taxon>
        <taxon>Gammaproteobacteria</taxon>
        <taxon>Enterobacterales</taxon>
        <taxon>Enterobacteriaceae</taxon>
        <taxon>Escherichia</taxon>
    </lineage>
</organism>
<dbReference type="EMBL" id="M74162">
    <property type="protein sequence ID" value="AAA23909.1"/>
    <property type="molecule type" value="Genomic_DNA"/>
</dbReference>
<dbReference type="EMBL" id="U18997">
    <property type="protein sequence ID" value="AAA58016.1"/>
    <property type="molecule type" value="Genomic_DNA"/>
</dbReference>
<dbReference type="EMBL" id="U00096">
    <property type="protein sequence ID" value="AAC76246.1"/>
    <property type="molecule type" value="Genomic_DNA"/>
</dbReference>
<dbReference type="EMBL" id="AP009048">
    <property type="protein sequence ID" value="BAE77258.1"/>
    <property type="molecule type" value="Genomic_DNA"/>
</dbReference>
<dbReference type="PIR" id="S25281">
    <property type="entry name" value="S25281"/>
</dbReference>
<dbReference type="RefSeq" id="NP_417681.1">
    <property type="nucleotide sequence ID" value="NC_000913.3"/>
</dbReference>
<dbReference type="RefSeq" id="WP_000465371.1">
    <property type="nucleotide sequence ID" value="NZ_SSZK01000007.1"/>
</dbReference>
<dbReference type="BioGRID" id="4262941">
    <property type="interactions" value="11"/>
</dbReference>
<dbReference type="BioGRID" id="852058">
    <property type="interactions" value="1"/>
</dbReference>
<dbReference type="FunCoup" id="P28721">
    <property type="interactions" value="18"/>
</dbReference>
<dbReference type="IntAct" id="P28721">
    <property type="interactions" value="3"/>
</dbReference>
<dbReference type="STRING" id="511145.b3214"/>
<dbReference type="PaxDb" id="511145-b3214"/>
<dbReference type="EnsemblBacteria" id="AAC76246">
    <property type="protein sequence ID" value="AAC76246"/>
    <property type="gene ID" value="b3214"/>
</dbReference>
<dbReference type="GeneID" id="947746"/>
<dbReference type="KEGG" id="ecj:JW3181"/>
<dbReference type="KEGG" id="eco:b3214"/>
<dbReference type="KEGG" id="ecoc:C3026_17485"/>
<dbReference type="PATRIC" id="fig|1411691.4.peg.3515"/>
<dbReference type="EchoBASE" id="EB1476"/>
<dbReference type="eggNOG" id="COG3539">
    <property type="taxonomic scope" value="Bacteria"/>
</dbReference>
<dbReference type="HOGENOM" id="CLU_093407_0_0_6"/>
<dbReference type="InParanoid" id="P28721"/>
<dbReference type="OMA" id="WAITGNE"/>
<dbReference type="OrthoDB" id="6572497at2"/>
<dbReference type="PhylomeDB" id="P28721"/>
<dbReference type="BioCyc" id="EcoCyc:EG11514-MONOMER"/>
<dbReference type="PRO" id="PR:P28721"/>
<dbReference type="Proteomes" id="UP000000625">
    <property type="component" value="Chromosome"/>
</dbReference>
<dbReference type="GO" id="GO:0030288">
    <property type="term" value="C:outer membrane-bounded periplasmic space"/>
    <property type="evidence" value="ECO:0000314"/>
    <property type="project" value="EcoCyc"/>
</dbReference>
<dbReference type="GO" id="GO:0005886">
    <property type="term" value="C:plasma membrane"/>
    <property type="evidence" value="ECO:0007669"/>
    <property type="project" value="UniProtKB-SubCell"/>
</dbReference>
<dbReference type="InterPro" id="IPR010546">
    <property type="entry name" value="DUF1120"/>
</dbReference>
<dbReference type="Pfam" id="PF06551">
    <property type="entry name" value="DUF1120"/>
    <property type="match status" value="1"/>
</dbReference>
<sequence length="254" mass="26352">MFFKKNLTTAAICAALSVAAFSAMATDSTDTELTIIGEYTPGACTPVVTGGGIVDYGKHHNSALNPTGKSNKLVQLGRKNSTLNITCTAPTLIAVTSKDNRQSTIVALNDTSYIEKAYDTLVDMKGTKNAFGLGSAPNGQKIGAASIGIDRSNGGIHAADDTGEIPVDLIQTDHWSAATPTWKASSNGAFCSLTSCSAIERGYSVAKTGELTPVAITAVTFPLLIDAAVNDNTILGSDETIKLDGNVTISVQYL</sequence>
<feature type="signal peptide" evidence="1">
    <location>
        <begin position="1"/>
        <end position="25"/>
    </location>
</feature>
<feature type="chain" id="PRO_0000021335" description="Protein GltF">
    <location>
        <begin position="26"/>
        <end position="254"/>
    </location>
</feature>
<feature type="transmembrane region" description="Helical" evidence="1">
    <location>
        <begin position="213"/>
        <end position="229"/>
    </location>
</feature>
<gene>
    <name type="primary">gltF</name>
    <name type="ordered locus">b3214</name>
    <name type="ordered locus">JW3181</name>
</gene>
<name>GLTF_ECOLI</name>